<gene>
    <name evidence="1" type="primary">trm1</name>
    <name type="ordered locus">TV0747</name>
    <name type="ORF">TVG0752240</name>
</gene>
<evidence type="ECO:0000255" key="1">
    <source>
        <dbReference type="HAMAP-Rule" id="MF_00290"/>
    </source>
</evidence>
<keyword id="KW-0489">Methyltransferase</keyword>
<keyword id="KW-0694">RNA-binding</keyword>
<keyword id="KW-0949">S-adenosyl-L-methionine</keyword>
<keyword id="KW-0808">Transferase</keyword>
<keyword id="KW-0819">tRNA processing</keyword>
<keyword id="KW-0820">tRNA-binding</keyword>
<reference key="1">
    <citation type="journal article" date="2000" name="Proc. Natl. Acad. Sci. U.S.A.">
        <title>Archaeal adaptation to higher temperatures revealed by genomic sequence of Thermoplasma volcanium.</title>
        <authorList>
            <person name="Kawashima T."/>
            <person name="Amano N."/>
            <person name="Koike H."/>
            <person name="Makino S."/>
            <person name="Higuchi S."/>
            <person name="Kawashima-Ohya Y."/>
            <person name="Watanabe K."/>
            <person name="Yamazaki M."/>
            <person name="Kanehori K."/>
            <person name="Kawamoto T."/>
            <person name="Nunoshiba T."/>
            <person name="Yamamoto Y."/>
            <person name="Aramaki H."/>
            <person name="Makino K."/>
            <person name="Suzuki M."/>
        </authorList>
    </citation>
    <scope>NUCLEOTIDE SEQUENCE [LARGE SCALE GENOMIC DNA]</scope>
    <source>
        <strain>ATCC 51530 / DSM 4299 / JCM 9571 / NBRC 15438 / GSS1</strain>
    </source>
</reference>
<feature type="chain" id="PRO_0000147696" description="tRNA (guanine(26)-N(2))-dimethyltransferase">
    <location>
        <begin position="1"/>
        <end position="342"/>
    </location>
</feature>
<feature type="domain" description="Trm1 methyltransferase" evidence="1">
    <location>
        <begin position="1"/>
        <end position="336"/>
    </location>
</feature>
<feature type="binding site" evidence="1">
    <location>
        <position position="35"/>
    </location>
    <ligand>
        <name>S-adenosyl-L-methionine</name>
        <dbReference type="ChEBI" id="CHEBI:59789"/>
    </ligand>
</feature>
<feature type="binding site" evidence="1">
    <location>
        <position position="60"/>
    </location>
    <ligand>
        <name>S-adenosyl-L-methionine</name>
        <dbReference type="ChEBI" id="CHEBI:59789"/>
    </ligand>
</feature>
<feature type="binding site" evidence="1">
    <location>
        <position position="76"/>
    </location>
    <ligand>
        <name>S-adenosyl-L-methionine</name>
        <dbReference type="ChEBI" id="CHEBI:59789"/>
    </ligand>
</feature>
<organism>
    <name type="scientific">Thermoplasma volcanium (strain ATCC 51530 / DSM 4299 / JCM 9571 / NBRC 15438 / GSS1)</name>
    <dbReference type="NCBI Taxonomy" id="273116"/>
    <lineage>
        <taxon>Archaea</taxon>
        <taxon>Methanobacteriati</taxon>
        <taxon>Thermoplasmatota</taxon>
        <taxon>Thermoplasmata</taxon>
        <taxon>Thermoplasmatales</taxon>
        <taxon>Thermoplasmataceae</taxon>
        <taxon>Thermoplasma</taxon>
    </lineage>
</organism>
<name>TRM1_THEVO</name>
<dbReference type="EC" id="2.1.1.216" evidence="1"/>
<dbReference type="EMBL" id="BA000011">
    <property type="protein sequence ID" value="BAB59889.1"/>
    <property type="molecule type" value="Genomic_DNA"/>
</dbReference>
<dbReference type="RefSeq" id="WP_010916994.1">
    <property type="nucleotide sequence ID" value="NC_002689.2"/>
</dbReference>
<dbReference type="SMR" id="Q97AR2"/>
<dbReference type="STRING" id="273116.gene:9381537"/>
<dbReference type="PaxDb" id="273116-14324963"/>
<dbReference type="DNASU" id="1441842"/>
<dbReference type="GeneID" id="1441842"/>
<dbReference type="KEGG" id="tvo:TVG0752240"/>
<dbReference type="eggNOG" id="arCOG01219">
    <property type="taxonomic scope" value="Archaea"/>
</dbReference>
<dbReference type="HOGENOM" id="CLU_010862_5_1_2"/>
<dbReference type="OrthoDB" id="372177at2157"/>
<dbReference type="PhylomeDB" id="Q97AR2"/>
<dbReference type="Proteomes" id="UP000001017">
    <property type="component" value="Chromosome"/>
</dbReference>
<dbReference type="GO" id="GO:0160104">
    <property type="term" value="F:tRNA (guanine(26)-N2)-dimethyltransferase activity"/>
    <property type="evidence" value="ECO:0007669"/>
    <property type="project" value="UniProtKB-UniRule"/>
</dbReference>
<dbReference type="GO" id="GO:0000049">
    <property type="term" value="F:tRNA binding"/>
    <property type="evidence" value="ECO:0007669"/>
    <property type="project" value="UniProtKB-KW"/>
</dbReference>
<dbReference type="GO" id="GO:0002940">
    <property type="term" value="P:tRNA N2-guanine methylation"/>
    <property type="evidence" value="ECO:0007669"/>
    <property type="project" value="TreeGrafter"/>
</dbReference>
<dbReference type="Gene3D" id="3.30.56.70">
    <property type="entry name" value="N2,N2-dimethylguanosine tRNA methyltransferase, C-terminal domain"/>
    <property type="match status" value="1"/>
</dbReference>
<dbReference type="Gene3D" id="3.40.50.150">
    <property type="entry name" value="Vaccinia Virus protein VP39"/>
    <property type="match status" value="1"/>
</dbReference>
<dbReference type="HAMAP" id="MF_00290">
    <property type="entry name" value="tRNA_dimethyltr_TRM1"/>
    <property type="match status" value="1"/>
</dbReference>
<dbReference type="InterPro" id="IPR029063">
    <property type="entry name" value="SAM-dependent_MTases_sf"/>
</dbReference>
<dbReference type="InterPro" id="IPR002905">
    <property type="entry name" value="Trm1"/>
</dbReference>
<dbReference type="InterPro" id="IPR022923">
    <property type="entry name" value="TRM1_arc_bac"/>
</dbReference>
<dbReference type="InterPro" id="IPR042296">
    <property type="entry name" value="tRNA_met_Trm1_C"/>
</dbReference>
<dbReference type="PANTHER" id="PTHR10631">
    <property type="entry name" value="N 2 ,N 2 -DIMETHYLGUANOSINE TRNA METHYLTRANSFERASE"/>
    <property type="match status" value="1"/>
</dbReference>
<dbReference type="PANTHER" id="PTHR10631:SF3">
    <property type="entry name" value="TRNA (GUANINE(26)-N(2))-DIMETHYLTRANSFERASE"/>
    <property type="match status" value="1"/>
</dbReference>
<dbReference type="Pfam" id="PF02005">
    <property type="entry name" value="TRM"/>
    <property type="match status" value="1"/>
</dbReference>
<dbReference type="SUPFAM" id="SSF53335">
    <property type="entry name" value="S-adenosyl-L-methionine-dependent methyltransferases"/>
    <property type="match status" value="1"/>
</dbReference>
<dbReference type="PROSITE" id="PS51626">
    <property type="entry name" value="SAM_MT_TRM1"/>
    <property type="match status" value="1"/>
</dbReference>
<protein>
    <recommendedName>
        <fullName evidence="1">tRNA (guanine(26)-N(2))-dimethyltransferase</fullName>
        <ecNumber evidence="1">2.1.1.216</ecNumber>
    </recommendedName>
    <alternativeName>
        <fullName evidence="1">tRNA 2,2-dimethylguanosine-26 methyltransferase</fullName>
    </alternativeName>
    <alternativeName>
        <fullName evidence="1">tRNA(guanine-26,N(2)-N(2)) methyltransferase</fullName>
    </alternativeName>
    <alternativeName>
        <fullName evidence="1">tRNA(m(2,2)G26)dimethyltransferase</fullName>
    </alternativeName>
</protein>
<accession>Q97AR2</accession>
<comment type="function">
    <text evidence="1">Dimethylates a single guanine residue at position 26 of a number of tRNAs using S-adenosyl-L-methionine as donor of the methyl groups.</text>
</comment>
<comment type="catalytic activity">
    <reaction evidence="1">
        <text>guanosine(26) in tRNA + 2 S-adenosyl-L-methionine = N(2)-dimethylguanosine(26) in tRNA + 2 S-adenosyl-L-homocysteine + 2 H(+)</text>
        <dbReference type="Rhea" id="RHEA:43140"/>
        <dbReference type="Rhea" id="RHEA-COMP:10359"/>
        <dbReference type="Rhea" id="RHEA-COMP:10360"/>
        <dbReference type="ChEBI" id="CHEBI:15378"/>
        <dbReference type="ChEBI" id="CHEBI:57856"/>
        <dbReference type="ChEBI" id="CHEBI:59789"/>
        <dbReference type="ChEBI" id="CHEBI:74269"/>
        <dbReference type="ChEBI" id="CHEBI:74513"/>
        <dbReference type="EC" id="2.1.1.216"/>
    </reaction>
</comment>
<comment type="similarity">
    <text evidence="1">Belongs to the class I-like SAM-binding methyltransferase superfamily. Trm1 family.</text>
</comment>
<sequence length="342" mass="38304">MRITEGSAVIEVPEAYSGPGRRSPGFYNADQVLNRDLTIDLINEFGVEKVLDGFGGSGVRGIRISLETKAKVVIAEISPSSCEIIKQNIAINNAEADLIHDNFQCVSSHIAFDYIDVDPYGSPVPYLDAAIMNVRKGGYLGITATDQSTLTGSTLNKTRRRYGAYIVNDIYRHEMGIRTLIGYIARRAAAFDRYIEPQLSIWNHHYYRVFVKVGKGVNGADKMIENIGYLNKHTTIDNSFKDVNEGPVWLSNLNNAELLEKIRDPRVSKKIEMIKHDNRLLFVDLTDIARKTSLSLPPLAKVMDEIMKHGYEAHRTSFSPTGIKTDCPYAEVSEILKAYAKR</sequence>
<proteinExistence type="inferred from homology"/>